<sequence length="85" mass="8752">MAQKKGGGSTRNGRDSKPKMLGVKAYGGELISAGSIIVRQRGTRIHPGVNVGVGKDHTLFALVDGHVSFGTKGALSKHTVSVTPA</sequence>
<reference key="1">
    <citation type="submission" date="2009-01" db="EMBL/GenBank/DDBJ databases">
        <title>Complete sequence of Diaphorobacter sp. TPSY.</title>
        <authorList>
            <consortium name="US DOE Joint Genome Institute"/>
            <person name="Lucas S."/>
            <person name="Copeland A."/>
            <person name="Lapidus A."/>
            <person name="Glavina del Rio T."/>
            <person name="Tice H."/>
            <person name="Bruce D."/>
            <person name="Goodwin L."/>
            <person name="Pitluck S."/>
            <person name="Chertkov O."/>
            <person name="Brettin T."/>
            <person name="Detter J.C."/>
            <person name="Han C."/>
            <person name="Larimer F."/>
            <person name="Land M."/>
            <person name="Hauser L."/>
            <person name="Kyrpides N."/>
            <person name="Mikhailova N."/>
            <person name="Coates J.D."/>
        </authorList>
    </citation>
    <scope>NUCLEOTIDE SEQUENCE [LARGE SCALE GENOMIC DNA]</scope>
    <source>
        <strain>TPSY</strain>
    </source>
</reference>
<proteinExistence type="inferred from homology"/>
<dbReference type="EMBL" id="CP001392">
    <property type="protein sequence ID" value="ACM32250.1"/>
    <property type="molecule type" value="Genomic_DNA"/>
</dbReference>
<dbReference type="RefSeq" id="WP_011804286.1">
    <property type="nucleotide sequence ID" value="NC_011992.1"/>
</dbReference>
<dbReference type="SMR" id="B9MDZ6"/>
<dbReference type="GeneID" id="84682668"/>
<dbReference type="KEGG" id="dia:Dtpsy_0771"/>
<dbReference type="eggNOG" id="COG0211">
    <property type="taxonomic scope" value="Bacteria"/>
</dbReference>
<dbReference type="HOGENOM" id="CLU_095424_4_1_4"/>
<dbReference type="Proteomes" id="UP000000450">
    <property type="component" value="Chromosome"/>
</dbReference>
<dbReference type="GO" id="GO:0022625">
    <property type="term" value="C:cytosolic large ribosomal subunit"/>
    <property type="evidence" value="ECO:0007669"/>
    <property type="project" value="TreeGrafter"/>
</dbReference>
<dbReference type="GO" id="GO:0003735">
    <property type="term" value="F:structural constituent of ribosome"/>
    <property type="evidence" value="ECO:0007669"/>
    <property type="project" value="InterPro"/>
</dbReference>
<dbReference type="GO" id="GO:0006412">
    <property type="term" value="P:translation"/>
    <property type="evidence" value="ECO:0007669"/>
    <property type="project" value="UniProtKB-UniRule"/>
</dbReference>
<dbReference type="FunFam" id="2.40.50.100:FF:000020">
    <property type="entry name" value="50S ribosomal protein L27"/>
    <property type="match status" value="1"/>
</dbReference>
<dbReference type="Gene3D" id="2.40.50.100">
    <property type="match status" value="1"/>
</dbReference>
<dbReference type="HAMAP" id="MF_00539">
    <property type="entry name" value="Ribosomal_bL27"/>
    <property type="match status" value="1"/>
</dbReference>
<dbReference type="InterPro" id="IPR001684">
    <property type="entry name" value="Ribosomal_bL27"/>
</dbReference>
<dbReference type="InterPro" id="IPR018261">
    <property type="entry name" value="Ribosomal_bL27_CS"/>
</dbReference>
<dbReference type="NCBIfam" id="TIGR00062">
    <property type="entry name" value="L27"/>
    <property type="match status" value="1"/>
</dbReference>
<dbReference type="PANTHER" id="PTHR15893:SF0">
    <property type="entry name" value="LARGE RIBOSOMAL SUBUNIT PROTEIN BL27M"/>
    <property type="match status" value="1"/>
</dbReference>
<dbReference type="PANTHER" id="PTHR15893">
    <property type="entry name" value="RIBOSOMAL PROTEIN L27"/>
    <property type="match status" value="1"/>
</dbReference>
<dbReference type="Pfam" id="PF01016">
    <property type="entry name" value="Ribosomal_L27"/>
    <property type="match status" value="1"/>
</dbReference>
<dbReference type="PRINTS" id="PR00063">
    <property type="entry name" value="RIBOSOMALL27"/>
</dbReference>
<dbReference type="SUPFAM" id="SSF110324">
    <property type="entry name" value="Ribosomal L27 protein-like"/>
    <property type="match status" value="1"/>
</dbReference>
<dbReference type="PROSITE" id="PS00831">
    <property type="entry name" value="RIBOSOMAL_L27"/>
    <property type="match status" value="1"/>
</dbReference>
<organism>
    <name type="scientific">Acidovorax ebreus (strain TPSY)</name>
    <name type="common">Diaphorobacter sp. (strain TPSY)</name>
    <dbReference type="NCBI Taxonomy" id="535289"/>
    <lineage>
        <taxon>Bacteria</taxon>
        <taxon>Pseudomonadati</taxon>
        <taxon>Pseudomonadota</taxon>
        <taxon>Betaproteobacteria</taxon>
        <taxon>Burkholderiales</taxon>
        <taxon>Comamonadaceae</taxon>
        <taxon>Diaphorobacter</taxon>
    </lineage>
</organism>
<accession>B9MDZ6</accession>
<evidence type="ECO:0000255" key="1">
    <source>
        <dbReference type="HAMAP-Rule" id="MF_00539"/>
    </source>
</evidence>
<evidence type="ECO:0000256" key="2">
    <source>
        <dbReference type="SAM" id="MobiDB-lite"/>
    </source>
</evidence>
<evidence type="ECO:0000305" key="3"/>
<protein>
    <recommendedName>
        <fullName evidence="1">Large ribosomal subunit protein bL27</fullName>
    </recommendedName>
    <alternativeName>
        <fullName evidence="3">50S ribosomal protein L27</fullName>
    </alternativeName>
</protein>
<keyword id="KW-1185">Reference proteome</keyword>
<keyword id="KW-0687">Ribonucleoprotein</keyword>
<keyword id="KW-0689">Ribosomal protein</keyword>
<comment type="similarity">
    <text evidence="1">Belongs to the bacterial ribosomal protein bL27 family.</text>
</comment>
<name>RL27_ACIET</name>
<gene>
    <name evidence="1" type="primary">rpmA</name>
    <name type="ordered locus">Dtpsy_0771</name>
</gene>
<feature type="chain" id="PRO_1000146528" description="Large ribosomal subunit protein bL27">
    <location>
        <begin position="1"/>
        <end position="85"/>
    </location>
</feature>
<feature type="region of interest" description="Disordered" evidence="2">
    <location>
        <begin position="1"/>
        <end position="20"/>
    </location>
</feature>
<feature type="compositionally biased region" description="Gly residues" evidence="2">
    <location>
        <begin position="1"/>
        <end position="10"/>
    </location>
</feature>